<gene>
    <name evidence="4" type="primary">FOLB3</name>
    <name evidence="6" type="ordered locus">At3g21730</name>
    <name evidence="7" type="ORF">MSD21.4</name>
</gene>
<proteinExistence type="evidence at transcript level"/>
<feature type="chain" id="PRO_0000431447" description="Probable dihydroneopterin aldolase 3">
    <location>
        <begin position="1"/>
        <end position="160"/>
    </location>
</feature>
<feature type="active site" description="Proton donor/acceptor" evidence="2">
    <location>
        <position position="137"/>
    </location>
</feature>
<feature type="binding site" evidence="1">
    <location>
        <position position="59"/>
    </location>
    <ligand>
        <name>substrate</name>
    </ligand>
</feature>
<feature type="binding site" evidence="1">
    <location>
        <position position="91"/>
    </location>
    <ligand>
        <name>substrate</name>
    </ligand>
</feature>
<feature type="binding site" evidence="1">
    <location>
        <begin position="110"/>
        <end position="111"/>
    </location>
    <ligand>
        <name>substrate</name>
    </ligand>
</feature>
<organism>
    <name type="scientific">Arabidopsis thaliana</name>
    <name type="common">Mouse-ear cress</name>
    <dbReference type="NCBI Taxonomy" id="3702"/>
    <lineage>
        <taxon>Eukaryota</taxon>
        <taxon>Viridiplantae</taxon>
        <taxon>Streptophyta</taxon>
        <taxon>Embryophyta</taxon>
        <taxon>Tracheophyta</taxon>
        <taxon>Spermatophyta</taxon>
        <taxon>Magnoliopsida</taxon>
        <taxon>eudicotyledons</taxon>
        <taxon>Gunneridae</taxon>
        <taxon>Pentapetalae</taxon>
        <taxon>rosids</taxon>
        <taxon>malvids</taxon>
        <taxon>Brassicales</taxon>
        <taxon>Brassicaceae</taxon>
        <taxon>Camelineae</taxon>
        <taxon>Arabidopsis</taxon>
    </lineage>
</organism>
<name>FOLB3_ARATH</name>
<accession>Q6GKX5</accession>
<accession>Q9LSZ1</accession>
<protein>
    <recommendedName>
        <fullName evidence="5">Probable dihydroneopterin aldolase 3</fullName>
        <shortName evidence="5">DHNA3</shortName>
        <ecNumber evidence="3">4.1.2.25</ecNumber>
    </recommendedName>
    <alternativeName>
        <fullName>7,8-dihydroneopterin aldolase</fullName>
    </alternativeName>
    <alternativeName>
        <fullName evidence="4">AtFolB3</fullName>
    </alternativeName>
</protein>
<evidence type="ECO:0000250" key="1">
    <source>
        <dbReference type="UniProtKB" id="P0AC16"/>
    </source>
</evidence>
<evidence type="ECO:0000250" key="2">
    <source>
        <dbReference type="UniProtKB" id="Q9SF23"/>
    </source>
</evidence>
<evidence type="ECO:0000269" key="3">
    <source>
    </source>
</evidence>
<evidence type="ECO:0000303" key="4">
    <source>
    </source>
</evidence>
<evidence type="ECO:0000305" key="5"/>
<evidence type="ECO:0000312" key="6">
    <source>
        <dbReference type="Araport" id="AT3G21730"/>
    </source>
</evidence>
<evidence type="ECO:0000312" key="7">
    <source>
        <dbReference type="EMBL" id="BAB02835.1"/>
    </source>
</evidence>
<reference key="1">
    <citation type="journal article" date="2000" name="DNA Res.">
        <title>Structural analysis of Arabidopsis thaliana chromosome 3. I. Sequence features of the regions of 4,504,864 bp covered by sixty P1 and TAC clones.</title>
        <authorList>
            <person name="Sato S."/>
            <person name="Nakamura Y."/>
            <person name="Kaneko T."/>
            <person name="Katoh T."/>
            <person name="Asamizu E."/>
            <person name="Tabata S."/>
        </authorList>
    </citation>
    <scope>NUCLEOTIDE SEQUENCE [LARGE SCALE GENOMIC DNA]</scope>
    <source>
        <strain>cv. Columbia</strain>
    </source>
</reference>
<reference key="2">
    <citation type="journal article" date="2017" name="Plant J.">
        <title>Araport11: a complete reannotation of the Arabidopsis thaliana reference genome.</title>
        <authorList>
            <person name="Cheng C.Y."/>
            <person name="Krishnakumar V."/>
            <person name="Chan A.P."/>
            <person name="Thibaud-Nissen F."/>
            <person name="Schobel S."/>
            <person name="Town C.D."/>
        </authorList>
    </citation>
    <scope>GENOME REANNOTATION</scope>
    <source>
        <strain>cv. Columbia</strain>
    </source>
</reference>
<reference key="3">
    <citation type="submission" date="2004-08" db="EMBL/GenBank/DDBJ databases">
        <title>Arabidopsis ORF clones.</title>
        <authorList>
            <person name="Kim C.J."/>
            <person name="Chen H."/>
            <person name="Cheuk R.F."/>
            <person name="Shinn P."/>
            <person name="Ecker J.R."/>
        </authorList>
    </citation>
    <scope>NUCLEOTIDE SEQUENCE [LARGE SCALE MRNA]</scope>
    <source>
        <strain>cv. Columbia</strain>
    </source>
</reference>
<reference key="4">
    <citation type="journal article" date="2004" name="Plant Physiol.">
        <title>Folate biosynthesis in higher plants. cDNA cloning, heterologous expression, and characterization of dihydroneopterin aldolases.</title>
        <authorList>
            <person name="Goyer A."/>
            <person name="Illarionova V."/>
            <person name="Roje S."/>
            <person name="Fischer M."/>
            <person name="Bacher A."/>
            <person name="Hanson A.D."/>
        </authorList>
    </citation>
    <scope>TISSUE SPECIFICITY</scope>
</reference>
<dbReference type="EC" id="4.1.2.25" evidence="3"/>
<dbReference type="EMBL" id="AB025634">
    <property type="protein sequence ID" value="BAB02835.1"/>
    <property type="status" value="ALT_SEQ"/>
    <property type="molecule type" value="Genomic_DNA"/>
</dbReference>
<dbReference type="EMBL" id="CP002686">
    <property type="protein sequence ID" value="AEE76545.1"/>
    <property type="molecule type" value="Genomic_DNA"/>
</dbReference>
<dbReference type="EMBL" id="BT014939">
    <property type="protein sequence ID" value="AAT47790.1"/>
    <property type="molecule type" value="mRNA"/>
</dbReference>
<dbReference type="EMBL" id="BT015391">
    <property type="protein sequence ID" value="AAU05514.1"/>
    <property type="molecule type" value="mRNA"/>
</dbReference>
<dbReference type="RefSeq" id="NP_188810.2">
    <molecule id="Q6GKX5-1"/>
    <property type="nucleotide sequence ID" value="NM_113068.3"/>
</dbReference>
<dbReference type="SMR" id="Q6GKX5"/>
<dbReference type="FunCoup" id="Q6GKX5">
    <property type="interactions" value="240"/>
</dbReference>
<dbReference type="STRING" id="3702.Q6GKX5"/>
<dbReference type="iPTMnet" id="Q6GKX5"/>
<dbReference type="PaxDb" id="3702-AT3G21730.1"/>
<dbReference type="ProteomicsDB" id="228941">
    <molecule id="Q6GKX5-1"/>
</dbReference>
<dbReference type="EnsemblPlants" id="AT3G21730.1">
    <molecule id="Q6GKX5-1"/>
    <property type="protein sequence ID" value="AT3G21730.1"/>
    <property type="gene ID" value="AT3G21730"/>
</dbReference>
<dbReference type="GeneID" id="821727"/>
<dbReference type="Gramene" id="AT3G21730.1">
    <molecule id="Q6GKX5-1"/>
    <property type="protein sequence ID" value="AT3G21730.1"/>
    <property type="gene ID" value="AT3G21730"/>
</dbReference>
<dbReference type="KEGG" id="ath:AT3G21730"/>
<dbReference type="Araport" id="AT3G21730"/>
<dbReference type="TAIR" id="AT3G21730">
    <property type="gene designation" value="FOLB3"/>
</dbReference>
<dbReference type="eggNOG" id="ENOG502RZV8">
    <property type="taxonomic scope" value="Eukaryota"/>
</dbReference>
<dbReference type="InParanoid" id="Q6GKX5"/>
<dbReference type="OMA" id="INPPIGG"/>
<dbReference type="OrthoDB" id="1863886at2759"/>
<dbReference type="PhylomeDB" id="Q6GKX5"/>
<dbReference type="BioCyc" id="ARA:AT3G21730-MONOMER"/>
<dbReference type="UniPathway" id="UPA00077">
    <property type="reaction ID" value="UER00154"/>
</dbReference>
<dbReference type="PRO" id="PR:Q6GKX5"/>
<dbReference type="Proteomes" id="UP000006548">
    <property type="component" value="Chromosome 3"/>
</dbReference>
<dbReference type="ExpressionAtlas" id="Q6GKX5">
    <property type="expression patterns" value="baseline and differential"/>
</dbReference>
<dbReference type="GO" id="GO:0004150">
    <property type="term" value="F:dihydroneopterin aldolase activity"/>
    <property type="evidence" value="ECO:0007669"/>
    <property type="project" value="UniProtKB-EC"/>
</dbReference>
<dbReference type="GO" id="GO:0046656">
    <property type="term" value="P:folic acid biosynthetic process"/>
    <property type="evidence" value="ECO:0007669"/>
    <property type="project" value="UniProtKB-KW"/>
</dbReference>
<dbReference type="GO" id="GO:0046654">
    <property type="term" value="P:tetrahydrofolate biosynthetic process"/>
    <property type="evidence" value="ECO:0007669"/>
    <property type="project" value="UniProtKB-UniPathway"/>
</dbReference>
<dbReference type="CDD" id="cd00534">
    <property type="entry name" value="DHNA_DHNTPE"/>
    <property type="match status" value="1"/>
</dbReference>
<dbReference type="FunFam" id="3.30.1130.10:FF:000003">
    <property type="entry name" value="7,8-dihydroneopterin aldolase"/>
    <property type="match status" value="1"/>
</dbReference>
<dbReference type="Gene3D" id="3.30.1130.10">
    <property type="match status" value="1"/>
</dbReference>
<dbReference type="InterPro" id="IPR006156">
    <property type="entry name" value="Dihydroneopterin_aldolase"/>
</dbReference>
<dbReference type="InterPro" id="IPR006157">
    <property type="entry name" value="FolB_dom"/>
</dbReference>
<dbReference type="InterPro" id="IPR043133">
    <property type="entry name" value="GTP-CH-I_C/QueF"/>
</dbReference>
<dbReference type="NCBIfam" id="TIGR00525">
    <property type="entry name" value="folB"/>
    <property type="match status" value="1"/>
</dbReference>
<dbReference type="NCBIfam" id="TIGR00526">
    <property type="entry name" value="folB_dom"/>
    <property type="match status" value="1"/>
</dbReference>
<dbReference type="PANTHER" id="PTHR42844">
    <property type="entry name" value="DIHYDRONEOPTERIN ALDOLASE 1-RELATED"/>
    <property type="match status" value="1"/>
</dbReference>
<dbReference type="PANTHER" id="PTHR42844:SF1">
    <property type="entry name" value="DIHYDRONEOPTERIN ALDOLASE 1-RELATED"/>
    <property type="match status" value="1"/>
</dbReference>
<dbReference type="Pfam" id="PF02152">
    <property type="entry name" value="FolB"/>
    <property type="match status" value="1"/>
</dbReference>
<dbReference type="SMART" id="SM00905">
    <property type="entry name" value="FolB"/>
    <property type="match status" value="1"/>
</dbReference>
<dbReference type="SUPFAM" id="SSF55620">
    <property type="entry name" value="Tetrahydrobiopterin biosynthesis enzymes-like"/>
    <property type="match status" value="1"/>
</dbReference>
<sequence length="160" mass="18035">MHSSLKTMAPAKLERLCVLSFFLFCATVFGTESLESLPEDKLILRGLKFYGFHGVLPEERELGGLFIVDINLWLSLKKAIESDNLADTVSFADTFRLVKKIVEGPPRNLYETVADDIASEMLETFPKINVIRVKFGKPNPSLVNSTVDFLGAELFRKRNH</sequence>
<comment type="function">
    <text evidence="2">Catalyzes the conversion of 7,8-dihydroneopterin into 6-hydroxymethyl-7,8-dihydropterin, a biosynthetic precursor of the vitamin tetrahydrofolate. Can use L-threo-dihydroneopterin and D-erythro-dihydroneopterin as substrates for the formation of 6-hydroxymethyldihydropterin, but it can also catalyze the epimerization of carbon 2' of dihydroneopterin and dihydromonapterin.</text>
</comment>
<comment type="catalytic activity">
    <reaction evidence="2">
        <text>7,8-dihydroneopterin = 6-hydroxymethyl-7,8-dihydropterin + glycolaldehyde</text>
        <dbReference type="Rhea" id="RHEA:10540"/>
        <dbReference type="ChEBI" id="CHEBI:17001"/>
        <dbReference type="ChEBI" id="CHEBI:17071"/>
        <dbReference type="ChEBI" id="CHEBI:44841"/>
        <dbReference type="EC" id="4.1.2.25"/>
    </reaction>
</comment>
<comment type="pathway">
    <text evidence="5">Cofactor biosynthesis; tetrahydrofolate biosynthesis; 2-amino-4-hydroxy-6-hydroxymethyl-7,8-dihydropteridine diphosphate from 7,8-dihydroneopterin triphosphate: step 3/4.</text>
</comment>
<comment type="subunit">
    <text evidence="2">Homooctamer. Forms a hollow cylinder assembled from two ring-shaped tetramers.</text>
</comment>
<comment type="alternative products">
    <event type="alternative splicing"/>
    <isoform>
        <id>Q6GKX5-1</id>
        <name>1</name>
        <sequence type="displayed"/>
    </isoform>
    <text evidence="5">A number of isoforms are produced. According to EST sequences.</text>
</comment>
<comment type="tissue specificity">
    <text evidence="3">Expressed at very low levels in siliques.</text>
</comment>
<comment type="similarity">
    <text evidence="5">Belongs to the DHNA family.</text>
</comment>
<comment type="sequence caution" evidence="5">
    <conflict type="erroneous gene model prediction">
        <sequence resource="EMBL-CDS" id="BAB02835"/>
    </conflict>
</comment>
<keyword id="KW-0025">Alternative splicing</keyword>
<keyword id="KW-0289">Folate biosynthesis</keyword>
<keyword id="KW-0456">Lyase</keyword>
<keyword id="KW-1185">Reference proteome</keyword>